<keyword id="KW-1185">Reference proteome</keyword>
<dbReference type="EMBL" id="AL591688">
    <property type="protein sequence ID" value="CAC47765.1"/>
    <property type="molecule type" value="Genomic_DNA"/>
</dbReference>
<dbReference type="RefSeq" id="NP_387292.1">
    <property type="nucleotide sequence ID" value="NC_003047.1"/>
</dbReference>
<dbReference type="RefSeq" id="WP_003537577.1">
    <property type="nucleotide sequence ID" value="NC_003047.1"/>
</dbReference>
<dbReference type="SMR" id="Q92L94"/>
<dbReference type="EnsemblBacteria" id="CAC47765">
    <property type="protein sequence ID" value="CAC47765"/>
    <property type="gene ID" value="SMc03803"/>
</dbReference>
<dbReference type="KEGG" id="sme:SMc03803"/>
<dbReference type="PATRIC" id="fig|266834.11.peg.4735"/>
<dbReference type="eggNOG" id="COG2835">
    <property type="taxonomic scope" value="Bacteria"/>
</dbReference>
<dbReference type="HOGENOM" id="CLU_155659_2_2_5"/>
<dbReference type="OrthoDB" id="9812205at2"/>
<dbReference type="Proteomes" id="UP000001976">
    <property type="component" value="Chromosome"/>
</dbReference>
<dbReference type="GO" id="GO:0005829">
    <property type="term" value="C:cytosol"/>
    <property type="evidence" value="ECO:0007669"/>
    <property type="project" value="TreeGrafter"/>
</dbReference>
<dbReference type="FunFam" id="2.20.25.10:FF:000002">
    <property type="entry name" value="UPF0434 protein YcaR"/>
    <property type="match status" value="1"/>
</dbReference>
<dbReference type="Gene3D" id="2.20.25.10">
    <property type="match status" value="1"/>
</dbReference>
<dbReference type="HAMAP" id="MF_01187">
    <property type="entry name" value="UPF0434"/>
    <property type="match status" value="1"/>
</dbReference>
<dbReference type="InterPro" id="IPR005651">
    <property type="entry name" value="Trm112-like"/>
</dbReference>
<dbReference type="PANTHER" id="PTHR33505:SF4">
    <property type="entry name" value="PROTEIN PREY, MITOCHONDRIAL"/>
    <property type="match status" value="1"/>
</dbReference>
<dbReference type="PANTHER" id="PTHR33505">
    <property type="entry name" value="ZGC:162634"/>
    <property type="match status" value="1"/>
</dbReference>
<dbReference type="Pfam" id="PF03966">
    <property type="entry name" value="Trm112p"/>
    <property type="match status" value="1"/>
</dbReference>
<dbReference type="SUPFAM" id="SSF158997">
    <property type="entry name" value="Trm112p-like"/>
    <property type="match status" value="1"/>
</dbReference>
<organism>
    <name type="scientific">Rhizobium meliloti (strain 1021)</name>
    <name type="common">Ensifer meliloti</name>
    <name type="synonym">Sinorhizobium meliloti</name>
    <dbReference type="NCBI Taxonomy" id="266834"/>
    <lineage>
        <taxon>Bacteria</taxon>
        <taxon>Pseudomonadati</taxon>
        <taxon>Pseudomonadota</taxon>
        <taxon>Alphaproteobacteria</taxon>
        <taxon>Hyphomicrobiales</taxon>
        <taxon>Rhizobiaceae</taxon>
        <taxon>Sinorhizobium/Ensifer group</taxon>
        <taxon>Sinorhizobium</taxon>
    </lineage>
</organism>
<gene>
    <name type="ordered locus">R03186</name>
    <name type="ORF">SMc03803</name>
</gene>
<reference key="1">
    <citation type="journal article" date="2001" name="Proc. Natl. Acad. Sci. U.S.A.">
        <title>Analysis of the chromosome sequence of the legume symbiont Sinorhizobium meliloti strain 1021.</title>
        <authorList>
            <person name="Capela D."/>
            <person name="Barloy-Hubler F."/>
            <person name="Gouzy J."/>
            <person name="Bothe G."/>
            <person name="Ampe F."/>
            <person name="Batut J."/>
            <person name="Boistard P."/>
            <person name="Becker A."/>
            <person name="Boutry M."/>
            <person name="Cadieu E."/>
            <person name="Dreano S."/>
            <person name="Gloux S."/>
            <person name="Godrie T."/>
            <person name="Goffeau A."/>
            <person name="Kahn D."/>
            <person name="Kiss E."/>
            <person name="Lelaure V."/>
            <person name="Masuy D."/>
            <person name="Pohl T."/>
            <person name="Portetelle D."/>
            <person name="Puehler A."/>
            <person name="Purnelle B."/>
            <person name="Ramsperger U."/>
            <person name="Renard C."/>
            <person name="Thebault P."/>
            <person name="Vandenbol M."/>
            <person name="Weidner S."/>
            <person name="Galibert F."/>
        </authorList>
    </citation>
    <scope>NUCLEOTIDE SEQUENCE [LARGE SCALE GENOMIC DNA]</scope>
    <source>
        <strain>1021</strain>
    </source>
</reference>
<reference key="2">
    <citation type="journal article" date="2001" name="Science">
        <title>The composite genome of the legume symbiont Sinorhizobium meliloti.</title>
        <authorList>
            <person name="Galibert F."/>
            <person name="Finan T.M."/>
            <person name="Long S.R."/>
            <person name="Puehler A."/>
            <person name="Abola P."/>
            <person name="Ampe F."/>
            <person name="Barloy-Hubler F."/>
            <person name="Barnett M.J."/>
            <person name="Becker A."/>
            <person name="Boistard P."/>
            <person name="Bothe G."/>
            <person name="Boutry M."/>
            <person name="Bowser L."/>
            <person name="Buhrmester J."/>
            <person name="Cadieu E."/>
            <person name="Capela D."/>
            <person name="Chain P."/>
            <person name="Cowie A."/>
            <person name="Davis R.W."/>
            <person name="Dreano S."/>
            <person name="Federspiel N.A."/>
            <person name="Fisher R.F."/>
            <person name="Gloux S."/>
            <person name="Godrie T."/>
            <person name="Goffeau A."/>
            <person name="Golding B."/>
            <person name="Gouzy J."/>
            <person name="Gurjal M."/>
            <person name="Hernandez-Lucas I."/>
            <person name="Hong A."/>
            <person name="Huizar L."/>
            <person name="Hyman R.W."/>
            <person name="Jones T."/>
            <person name="Kahn D."/>
            <person name="Kahn M.L."/>
            <person name="Kalman S."/>
            <person name="Keating D.H."/>
            <person name="Kiss E."/>
            <person name="Komp C."/>
            <person name="Lelaure V."/>
            <person name="Masuy D."/>
            <person name="Palm C."/>
            <person name="Peck M.C."/>
            <person name="Pohl T.M."/>
            <person name="Portetelle D."/>
            <person name="Purnelle B."/>
            <person name="Ramsperger U."/>
            <person name="Surzycki R."/>
            <person name="Thebault P."/>
            <person name="Vandenbol M."/>
            <person name="Vorhoelter F.J."/>
            <person name="Weidner S."/>
            <person name="Wells D.H."/>
            <person name="Wong K."/>
            <person name="Yeh K.-C."/>
            <person name="Batut J."/>
        </authorList>
    </citation>
    <scope>NUCLEOTIDE SEQUENCE [LARGE SCALE GENOMIC DNA]</scope>
    <source>
        <strain>1021</strain>
    </source>
</reference>
<sequence length="62" mass="6925">MDINASKVDPKLLELLVCPLTKGRLSYDPEANELVSEKARLAYPIRDGVPIMLVSEARKIED</sequence>
<feature type="chain" id="PRO_0000291147" description="UPF0434 protein R03186">
    <location>
        <begin position="1"/>
        <end position="62"/>
    </location>
</feature>
<comment type="similarity">
    <text evidence="1">Belongs to the UPF0434 family.</text>
</comment>
<accession>Q92L94</accession>
<evidence type="ECO:0000255" key="1">
    <source>
        <dbReference type="HAMAP-Rule" id="MF_01187"/>
    </source>
</evidence>
<proteinExistence type="inferred from homology"/>
<protein>
    <recommendedName>
        <fullName evidence="1">UPF0434 protein R03186</fullName>
    </recommendedName>
</protein>
<name>Y3186_RHIME</name>